<organism>
    <name type="scientific">Oryza sativa subsp. japonica</name>
    <name type="common">Rice</name>
    <dbReference type="NCBI Taxonomy" id="39947"/>
    <lineage>
        <taxon>Eukaryota</taxon>
        <taxon>Viridiplantae</taxon>
        <taxon>Streptophyta</taxon>
        <taxon>Embryophyta</taxon>
        <taxon>Tracheophyta</taxon>
        <taxon>Spermatophyta</taxon>
        <taxon>Magnoliopsida</taxon>
        <taxon>Liliopsida</taxon>
        <taxon>Poales</taxon>
        <taxon>Poaceae</taxon>
        <taxon>BOP clade</taxon>
        <taxon>Oryzoideae</taxon>
        <taxon>Oryzeae</taxon>
        <taxon>Oryzinae</taxon>
        <taxon>Oryza</taxon>
        <taxon>Oryza sativa</taxon>
    </lineage>
</organism>
<comment type="similarity">
    <text evidence="4">Belongs to the TRAFAC class myosin-kinesin ATPase superfamily. Kinesin family. KIN-12 subfamily.</text>
</comment>
<comment type="sequence caution" evidence="5">
    <conflict type="erroneous gene model prediction">
        <sequence resource="EMBL-CDS" id="BAD31261"/>
    </conflict>
</comment>
<comment type="sequence caution" evidence="5">
    <conflict type="erroneous gene model prediction">
        <sequence resource="EMBL-CDS" id="BAF22319"/>
    </conflict>
</comment>
<comment type="sequence caution" evidence="5">
    <conflict type="erroneous initiation">
        <sequence resource="EMBL-CDS" id="BAG87394"/>
    </conflict>
    <text>Truncated N-terminus.</text>
</comment>
<comment type="sequence caution" evidence="5">
    <conflict type="erroneous gene model prediction">
        <sequence resource="EMBL-CDS" id="BAT02836"/>
    </conflict>
</comment>
<comment type="sequence caution" evidence="5">
    <conflict type="erroneous gene model prediction">
        <sequence resource="EMBL-CDS" id="EEE67666"/>
    </conflict>
</comment>
<proteinExistence type="evidence at transcript level"/>
<protein>
    <recommendedName>
        <fullName evidence="5">Kinesin-like protein KIN-12E</fullName>
    </recommendedName>
</protein>
<accession>B9FUF9</accession>
<accession>A0A0P0X9F0</accession>
<accession>Q0D4A4</accession>
<accession>Q69R12</accession>
<sequence>MAGHGAGGRRASTSRAAARRVEAETNENDDLAAAAARDLAAAEVPAEVPHFELDEDPAFWKDRNVQVLIRIRPINAAESTANGQRRCLVQDSSKTLSWTGHPDTMFTFDHVACETISQEKLFGVVGLPMVENCMSGYNGCLFAYGQTGSGKTYTMMGELSKLDNELSKDSGLTPRIFEYLFARIKEEEERRREDKLKYICKCSFLEIYNEQITDLLEPSSTNLQIREDIKKGVYVENLMECYVSSVKDVMMLLLQGVANRKMAATNMNSESSRSHSVFTCVIESRWERDSMTHLRFGRLNLVDLAGSERQKSSGAEGERLKEAANINRSLSTLGLVIMTLVDVANGKNRHVPYRDSRLTFLLQDSLGGNSKTTIVANVSPSICSSSETLSTLKFAQRAKLIQNNAKVNEDASGDVMSLQRQIEDLKDQLTCLKKQQNMPGSPSFKLLKSGYGNEFNSLHGVDDQSACDLELLKQKVIHLEDVLVGSLRREKSAETEIRKLECEIKSLNRLVNLMESDTRHLRTTVKLRDEKIRRLELLADNQISSDGYLMDENAAMFQEIQLLQEQINDNSQLTQFALENKRLIEQVRMLEKFSKQGEREMLLTEISLLRNHFLHILEQKYARPPKNMEAQGDVTIKELETCRKELDACLENNVLLAREVNKLRCELKQYQKCGTGQVAPEVVESSVIPGINQKQHDQAGWCGSYLASIDVERQFVDVGITTDITESLELTPPSEIYSENQDSPSRLHFSDPEICDLKNSTKVLEYNSSRNLLDKGIILSGQLENECGLNSVQNDEISLVKENAEKMYGHDEISVYRQNEILHSSEQLLQDELTHIKSLNEGLKEKLIIMAEESTKLSEIIVAKDVEIATLSEEWESAIVDLTSFLTDGCSSLDDAYQNIDNMISSFPYNNHSVSEHVEKAMKVSIEKEKIISRLQIELQAAQRMGREVKEKLHILRGATLAITEAQLLDNDESQEALKLLDLMRQKDCTVQELNDNVKQKSCLFAEATEGYSRHECHLPDNVGTVAEISHNRDGSEVNQANTHYQAKLEDVLHLVEDKSNKVLALFSNFEEAQETMEEAETMLSSLLKANEELKLEKDSCRQAVELLFAERTSLINDLQELEASNSFTAQRYDKLHEQVNGCVAEMTNLATIIKESFHQVQRVTTVELFAFCSEVISFGQDLRKWIYESRSYLVNMGALLEEQGNSYAEQNRRTNSSTYAGVSQQVESCSRQLGGMNGDIFPGTYMVVDGKEKASVHVVPFGSNAELEDTNVERTFDMDYASLRREFDRKSDVAEGLSFDLKLLQESTSQAKDMKDKADEISDALVSVQRELEKKTSAMESILKQQKVLEEELAENGAALLILRSELEHSESLSSELFKENNNLKVMLEEEAMMISETKAMLEDKSKVIEGLEHEILLLNSSEEGRLMSQIKELNDNLKIISIDKGNLEEEILKLTDKLEMAVALAEENEAASIEARQAAEISKVYAEEKEEEVRILERSVEELESTITVLEEEVCNLKEEVRSYQIYKKSEAEQAQEMFIVDSTSKCDATEQLCPGRCQLEKRLKAEIIAHQDARRKIECLTMEASCKDEEVRQYKEHIAELVLHSEAQSLLFQEKYQEMEHMISKQKFGLHESNSDTGHTKFEKPSGRTRGSGSPFRCISSIVQQMNSEKDQEISVARQRIEELEGLVCNKQKEICMLTSRLAAVDSMTHDIIRELLGVKLDMTNYANMLDQEELQKLLMASQQQIEQSKAKDVELDMLKEQFDHLIQERDSLFDDMDQRKADLLESQLLIEQLEQREQMLEAQNGILQMEKDNLQQRIMEMDEEIQLLVGSNQAIAETTFQMGSNHRSANSEFSRRLAQSDMLLSHARHEHSRLQAAKSSRTRRGSHQ</sequence>
<keyword id="KW-0067">ATP-binding</keyword>
<keyword id="KW-0175">Coiled coil</keyword>
<keyword id="KW-0493">Microtubule</keyword>
<keyword id="KW-0505">Motor protein</keyword>
<keyword id="KW-0547">Nucleotide-binding</keyword>
<keyword id="KW-1185">Reference proteome</keyword>
<evidence type="ECO:0000255" key="1"/>
<evidence type="ECO:0000255" key="2">
    <source>
        <dbReference type="PROSITE-ProRule" id="PRU00283"/>
    </source>
</evidence>
<evidence type="ECO:0000256" key="3">
    <source>
        <dbReference type="SAM" id="MobiDB-lite"/>
    </source>
</evidence>
<evidence type="ECO:0000303" key="4">
    <source>
    </source>
</evidence>
<evidence type="ECO:0000305" key="5"/>
<evidence type="ECO:0000312" key="6">
    <source>
        <dbReference type="EMBL" id="BAD31261.1"/>
    </source>
</evidence>
<evidence type="ECO:0000312" key="7">
    <source>
        <dbReference type="EMBL" id="BAT02836.1"/>
    </source>
</evidence>
<evidence type="ECO:0000312" key="8">
    <source>
        <dbReference type="EMBL" id="EEE67666.1"/>
    </source>
</evidence>
<gene>
    <name evidence="5" type="primary">KIN12E</name>
    <name evidence="7" type="ordered locus">Os07g0638000</name>
    <name evidence="5" type="ordered locus">LOC_Os07g44400</name>
    <name evidence="6" type="ORF">OJ1340_C08.103</name>
    <name evidence="8" type="ORF">OsJ_25289</name>
</gene>
<dbReference type="EMBL" id="AP005292">
    <property type="protein sequence ID" value="BAD31261.1"/>
    <property type="status" value="ALT_SEQ"/>
    <property type="molecule type" value="Genomic_DNA"/>
</dbReference>
<dbReference type="EMBL" id="AP008213">
    <property type="protein sequence ID" value="BAF22319.2"/>
    <property type="status" value="ALT_SEQ"/>
    <property type="molecule type" value="Genomic_DNA"/>
</dbReference>
<dbReference type="EMBL" id="AP014963">
    <property type="protein sequence ID" value="BAT02836.1"/>
    <property type="status" value="ALT_SEQ"/>
    <property type="molecule type" value="Genomic_DNA"/>
</dbReference>
<dbReference type="EMBL" id="CM000144">
    <property type="protein sequence ID" value="EEE67666.1"/>
    <property type="status" value="ALT_SEQ"/>
    <property type="molecule type" value="Genomic_DNA"/>
</dbReference>
<dbReference type="EMBL" id="AK060298">
    <property type="protein sequence ID" value="BAG87394.1"/>
    <property type="status" value="ALT_INIT"/>
    <property type="molecule type" value="mRNA"/>
</dbReference>
<dbReference type="SMR" id="B9FUF9"/>
<dbReference type="FunCoup" id="B9FUF9">
    <property type="interactions" value="95"/>
</dbReference>
<dbReference type="STRING" id="39947.B9FUF9"/>
<dbReference type="PaxDb" id="39947-B9FUF9"/>
<dbReference type="KEGG" id="dosa:Os07g0638000"/>
<dbReference type="eggNOG" id="ENOG502QR1R">
    <property type="taxonomic scope" value="Eukaryota"/>
</dbReference>
<dbReference type="HOGENOM" id="CLU_024288_0_0_1"/>
<dbReference type="InParanoid" id="B9FUF9"/>
<dbReference type="Proteomes" id="UP000000763">
    <property type="component" value="Chromosome 7"/>
</dbReference>
<dbReference type="Proteomes" id="UP000007752">
    <property type="component" value="Chromosome 7"/>
</dbReference>
<dbReference type="Proteomes" id="UP000059680">
    <property type="component" value="Chromosome 7"/>
</dbReference>
<dbReference type="GO" id="GO:0032153">
    <property type="term" value="C:cell division site"/>
    <property type="evidence" value="ECO:0000318"/>
    <property type="project" value="GO_Central"/>
</dbReference>
<dbReference type="GO" id="GO:0005874">
    <property type="term" value="C:microtubule"/>
    <property type="evidence" value="ECO:0007669"/>
    <property type="project" value="UniProtKB-KW"/>
</dbReference>
<dbReference type="GO" id="GO:0005524">
    <property type="term" value="F:ATP binding"/>
    <property type="evidence" value="ECO:0007669"/>
    <property type="project" value="UniProtKB-KW"/>
</dbReference>
<dbReference type="GO" id="GO:0008017">
    <property type="term" value="F:microtubule binding"/>
    <property type="evidence" value="ECO:0007669"/>
    <property type="project" value="InterPro"/>
</dbReference>
<dbReference type="GO" id="GO:0003777">
    <property type="term" value="F:microtubule motor activity"/>
    <property type="evidence" value="ECO:0007669"/>
    <property type="project" value="InterPro"/>
</dbReference>
<dbReference type="GO" id="GO:0007018">
    <property type="term" value="P:microtubule-based movement"/>
    <property type="evidence" value="ECO:0007669"/>
    <property type="project" value="InterPro"/>
</dbReference>
<dbReference type="GO" id="GO:0000281">
    <property type="term" value="P:mitotic cytokinesis"/>
    <property type="evidence" value="ECO:0000318"/>
    <property type="project" value="GO_Central"/>
</dbReference>
<dbReference type="FunFam" id="3.40.850.10:FF:000033">
    <property type="entry name" value="Kinesin-like protein KIN-12E"/>
    <property type="match status" value="1"/>
</dbReference>
<dbReference type="Gene3D" id="3.40.850.10">
    <property type="entry name" value="Kinesin motor domain"/>
    <property type="match status" value="1"/>
</dbReference>
<dbReference type="InterPro" id="IPR044986">
    <property type="entry name" value="KIF15/KIN-12"/>
</dbReference>
<dbReference type="InterPro" id="IPR019821">
    <property type="entry name" value="Kinesin_motor_CS"/>
</dbReference>
<dbReference type="InterPro" id="IPR001752">
    <property type="entry name" value="Kinesin_motor_dom"/>
</dbReference>
<dbReference type="InterPro" id="IPR036961">
    <property type="entry name" value="Kinesin_motor_dom_sf"/>
</dbReference>
<dbReference type="InterPro" id="IPR027417">
    <property type="entry name" value="P-loop_NTPase"/>
</dbReference>
<dbReference type="PANTHER" id="PTHR37739">
    <property type="entry name" value="KINESIN-LIKE PROTEIN KIN-12D"/>
    <property type="match status" value="1"/>
</dbReference>
<dbReference type="PANTHER" id="PTHR37739:SF19">
    <property type="entry name" value="KINESIN-LIKE PROTEIN KIN-12E"/>
    <property type="match status" value="1"/>
</dbReference>
<dbReference type="Pfam" id="PF00225">
    <property type="entry name" value="Kinesin"/>
    <property type="match status" value="1"/>
</dbReference>
<dbReference type="PRINTS" id="PR00380">
    <property type="entry name" value="KINESINHEAVY"/>
</dbReference>
<dbReference type="SMART" id="SM00129">
    <property type="entry name" value="KISc"/>
    <property type="match status" value="1"/>
</dbReference>
<dbReference type="SUPFAM" id="SSF52540">
    <property type="entry name" value="P-loop containing nucleoside triphosphate hydrolases"/>
    <property type="match status" value="1"/>
</dbReference>
<dbReference type="PROSITE" id="PS00411">
    <property type="entry name" value="KINESIN_MOTOR_1"/>
    <property type="match status" value="1"/>
</dbReference>
<dbReference type="PROSITE" id="PS50067">
    <property type="entry name" value="KINESIN_MOTOR_2"/>
    <property type="match status" value="1"/>
</dbReference>
<name>KN12E_ORYSJ</name>
<reference key="1">
    <citation type="journal article" date="2005" name="Nature">
        <title>The map-based sequence of the rice genome.</title>
        <authorList>
            <consortium name="International rice genome sequencing project (IRGSP)"/>
        </authorList>
    </citation>
    <scope>NUCLEOTIDE SEQUENCE [LARGE SCALE GENOMIC DNA]</scope>
    <source>
        <strain>cv. Nipponbare</strain>
    </source>
</reference>
<reference key="2">
    <citation type="journal article" date="2008" name="Nucleic Acids Res.">
        <title>The rice annotation project database (RAP-DB): 2008 update.</title>
        <authorList>
            <consortium name="The rice annotation project (RAP)"/>
        </authorList>
    </citation>
    <scope>GENOME REANNOTATION</scope>
    <source>
        <strain>cv. Nipponbare</strain>
    </source>
</reference>
<reference key="3">
    <citation type="journal article" date="2013" name="Rice">
        <title>Improvement of the Oryza sativa Nipponbare reference genome using next generation sequence and optical map data.</title>
        <authorList>
            <person name="Kawahara Y."/>
            <person name="de la Bastide M."/>
            <person name="Hamilton J.P."/>
            <person name="Kanamori H."/>
            <person name="McCombie W.R."/>
            <person name="Ouyang S."/>
            <person name="Schwartz D.C."/>
            <person name="Tanaka T."/>
            <person name="Wu J."/>
            <person name="Zhou S."/>
            <person name="Childs K.L."/>
            <person name="Davidson R.M."/>
            <person name="Lin H."/>
            <person name="Quesada-Ocampo L."/>
            <person name="Vaillancourt B."/>
            <person name="Sakai H."/>
            <person name="Lee S.S."/>
            <person name="Kim J."/>
            <person name="Numa H."/>
            <person name="Itoh T."/>
            <person name="Buell C.R."/>
            <person name="Matsumoto T."/>
        </authorList>
    </citation>
    <scope>GENOME REANNOTATION</scope>
    <source>
        <strain>cv. Nipponbare</strain>
    </source>
</reference>
<reference key="4">
    <citation type="journal article" date="2005" name="PLoS Biol.">
        <title>The genomes of Oryza sativa: a history of duplications.</title>
        <authorList>
            <person name="Yu J."/>
            <person name="Wang J."/>
            <person name="Lin W."/>
            <person name="Li S."/>
            <person name="Li H."/>
            <person name="Zhou J."/>
            <person name="Ni P."/>
            <person name="Dong W."/>
            <person name="Hu S."/>
            <person name="Zeng C."/>
            <person name="Zhang J."/>
            <person name="Zhang Y."/>
            <person name="Li R."/>
            <person name="Xu Z."/>
            <person name="Li S."/>
            <person name="Li X."/>
            <person name="Zheng H."/>
            <person name="Cong L."/>
            <person name="Lin L."/>
            <person name="Yin J."/>
            <person name="Geng J."/>
            <person name="Li G."/>
            <person name="Shi J."/>
            <person name="Liu J."/>
            <person name="Lv H."/>
            <person name="Li J."/>
            <person name="Wang J."/>
            <person name="Deng Y."/>
            <person name="Ran L."/>
            <person name="Shi X."/>
            <person name="Wang X."/>
            <person name="Wu Q."/>
            <person name="Li C."/>
            <person name="Ren X."/>
            <person name="Wang J."/>
            <person name="Wang X."/>
            <person name="Li D."/>
            <person name="Liu D."/>
            <person name="Zhang X."/>
            <person name="Ji Z."/>
            <person name="Zhao W."/>
            <person name="Sun Y."/>
            <person name="Zhang Z."/>
            <person name="Bao J."/>
            <person name="Han Y."/>
            <person name="Dong L."/>
            <person name="Ji J."/>
            <person name="Chen P."/>
            <person name="Wu S."/>
            <person name="Liu J."/>
            <person name="Xiao Y."/>
            <person name="Bu D."/>
            <person name="Tan J."/>
            <person name="Yang L."/>
            <person name="Ye C."/>
            <person name="Zhang J."/>
            <person name="Xu J."/>
            <person name="Zhou Y."/>
            <person name="Yu Y."/>
            <person name="Zhang B."/>
            <person name="Zhuang S."/>
            <person name="Wei H."/>
            <person name="Liu B."/>
            <person name="Lei M."/>
            <person name="Yu H."/>
            <person name="Li Y."/>
            <person name="Xu H."/>
            <person name="Wei S."/>
            <person name="He X."/>
            <person name="Fang L."/>
            <person name="Zhang Z."/>
            <person name="Zhang Y."/>
            <person name="Huang X."/>
            <person name="Su Z."/>
            <person name="Tong W."/>
            <person name="Li J."/>
            <person name="Tong Z."/>
            <person name="Li S."/>
            <person name="Ye J."/>
            <person name="Wang L."/>
            <person name="Fang L."/>
            <person name="Lei T."/>
            <person name="Chen C.-S."/>
            <person name="Chen H.-C."/>
            <person name="Xu Z."/>
            <person name="Li H."/>
            <person name="Huang H."/>
            <person name="Zhang F."/>
            <person name="Xu H."/>
            <person name="Li N."/>
            <person name="Zhao C."/>
            <person name="Li S."/>
            <person name="Dong L."/>
            <person name="Huang Y."/>
            <person name="Li L."/>
            <person name="Xi Y."/>
            <person name="Qi Q."/>
            <person name="Li W."/>
            <person name="Zhang B."/>
            <person name="Hu W."/>
            <person name="Zhang Y."/>
            <person name="Tian X."/>
            <person name="Jiao Y."/>
            <person name="Liang X."/>
            <person name="Jin J."/>
            <person name="Gao L."/>
            <person name="Zheng W."/>
            <person name="Hao B."/>
            <person name="Liu S.-M."/>
            <person name="Wang W."/>
            <person name="Yuan L."/>
            <person name="Cao M."/>
            <person name="McDermott J."/>
            <person name="Samudrala R."/>
            <person name="Wang J."/>
            <person name="Wong G.K.-S."/>
            <person name="Yang H."/>
        </authorList>
    </citation>
    <scope>NUCLEOTIDE SEQUENCE [LARGE SCALE GENOMIC DNA]</scope>
    <source>
        <strain>cv. Nipponbare</strain>
    </source>
</reference>
<reference key="5">
    <citation type="journal article" date="2003" name="Science">
        <title>Collection, mapping, and annotation of over 28,000 cDNA clones from japonica rice.</title>
        <authorList>
            <consortium name="The rice full-length cDNA consortium"/>
        </authorList>
    </citation>
    <scope>NUCLEOTIDE SEQUENCE [LARGE SCALE MRNA] OF 1492-1892</scope>
    <source>
        <strain>cv. Nipponbare</strain>
    </source>
</reference>
<reference key="6">
    <citation type="journal article" date="2009" name="Ann. Bot.">
        <title>Evaluating the microtubule cytoskeleton and its interacting proteins in monocots by mining the rice genome.</title>
        <authorList>
            <person name="Guo L."/>
            <person name="Ho C.M."/>
            <person name="Kong Z."/>
            <person name="Lee Y.R."/>
            <person name="Qian Q."/>
            <person name="Liu B."/>
        </authorList>
    </citation>
    <scope>GENE FAMILY</scope>
    <scope>NOMENCLATURE</scope>
</reference>
<feature type="chain" id="PRO_0000437197" description="Kinesin-like protein KIN-12E">
    <location>
        <begin position="1"/>
        <end position="1892"/>
    </location>
</feature>
<feature type="domain" description="Kinesin motor" evidence="2">
    <location>
        <begin position="64"/>
        <end position="401"/>
    </location>
</feature>
<feature type="region of interest" description="Disordered" evidence="3">
    <location>
        <begin position="1"/>
        <end position="28"/>
    </location>
</feature>
<feature type="region of interest" description="Disordered" evidence="3">
    <location>
        <begin position="1633"/>
        <end position="1656"/>
    </location>
</feature>
<feature type="region of interest" description="Disordered" evidence="3">
    <location>
        <begin position="1870"/>
        <end position="1892"/>
    </location>
</feature>
<feature type="coiled-coil region" evidence="1">
    <location>
        <begin position="406"/>
        <end position="438"/>
    </location>
</feature>
<feature type="coiled-coil region" evidence="1">
    <location>
        <begin position="486"/>
        <end position="526"/>
    </location>
</feature>
<feature type="coiled-coil region" evidence="1">
    <location>
        <begin position="1066"/>
        <end position="1139"/>
    </location>
</feature>
<feature type="coiled-coil region" evidence="1">
    <location>
        <begin position="1303"/>
        <end position="1357"/>
    </location>
</feature>
<feature type="coiled-coil region" evidence="1">
    <location>
        <begin position="1396"/>
        <end position="1528"/>
    </location>
</feature>
<feature type="coiled-coil region" evidence="1">
    <location>
        <begin position="1780"/>
        <end position="1841"/>
    </location>
</feature>
<feature type="compositionally biased region" description="Basic and acidic residues" evidence="3">
    <location>
        <begin position="1633"/>
        <end position="1649"/>
    </location>
</feature>
<feature type="binding site" evidence="2">
    <location>
        <begin position="145"/>
        <end position="152"/>
    </location>
    <ligand>
        <name>ATP</name>
        <dbReference type="ChEBI" id="CHEBI:30616"/>
    </ligand>
</feature>